<proteinExistence type="inferred from homology"/>
<gene>
    <name evidence="1" type="primary">arcA</name>
    <name type="ordered locus">SERP2250</name>
</gene>
<protein>
    <recommendedName>
        <fullName evidence="1">Arginine deiminase</fullName>
        <shortName evidence="1">ADI</shortName>
        <ecNumber evidence="1">3.5.3.6</ecNumber>
    </recommendedName>
    <alternativeName>
        <fullName evidence="1">Arginine dihydrolase</fullName>
        <shortName evidence="1">AD</shortName>
    </alternativeName>
</protein>
<comment type="catalytic activity">
    <reaction evidence="1">
        <text>L-arginine + H2O = L-citrulline + NH4(+)</text>
        <dbReference type="Rhea" id="RHEA:19597"/>
        <dbReference type="ChEBI" id="CHEBI:15377"/>
        <dbReference type="ChEBI" id="CHEBI:28938"/>
        <dbReference type="ChEBI" id="CHEBI:32682"/>
        <dbReference type="ChEBI" id="CHEBI:57743"/>
        <dbReference type="EC" id="3.5.3.6"/>
    </reaction>
</comment>
<comment type="pathway">
    <text evidence="1">Amino-acid degradation; L-arginine degradation via ADI pathway; carbamoyl phosphate from L-arginine: step 1/2.</text>
</comment>
<comment type="subcellular location">
    <subcellularLocation>
        <location evidence="1">Cytoplasm</location>
    </subcellularLocation>
</comment>
<comment type="similarity">
    <text evidence="1">Belongs to the arginine deiminase family.</text>
</comment>
<reference key="1">
    <citation type="journal article" date="2005" name="J. Bacteriol.">
        <title>Insights on evolution of virulence and resistance from the complete genome analysis of an early methicillin-resistant Staphylococcus aureus strain and a biofilm-producing methicillin-resistant Staphylococcus epidermidis strain.</title>
        <authorList>
            <person name="Gill S.R."/>
            <person name="Fouts D.E."/>
            <person name="Archer G.L."/>
            <person name="Mongodin E.F."/>
            <person name="DeBoy R.T."/>
            <person name="Ravel J."/>
            <person name="Paulsen I.T."/>
            <person name="Kolonay J.F."/>
            <person name="Brinkac L.M."/>
            <person name="Beanan M.J."/>
            <person name="Dodson R.J."/>
            <person name="Daugherty S.C."/>
            <person name="Madupu R."/>
            <person name="Angiuoli S.V."/>
            <person name="Durkin A.S."/>
            <person name="Haft D.H."/>
            <person name="Vamathevan J.J."/>
            <person name="Khouri H."/>
            <person name="Utterback T.R."/>
            <person name="Lee C."/>
            <person name="Dimitrov G."/>
            <person name="Jiang L."/>
            <person name="Qin H."/>
            <person name="Weidman J."/>
            <person name="Tran K."/>
            <person name="Kang K.H."/>
            <person name="Hance I.R."/>
            <person name="Nelson K.E."/>
            <person name="Fraser C.M."/>
        </authorList>
    </citation>
    <scope>NUCLEOTIDE SEQUENCE [LARGE SCALE GENOMIC DNA]</scope>
    <source>
        <strain>ATCC 35984 / DSM 28319 / BCRC 17069 / CCUG 31568 / BM 3577 / RP62A</strain>
    </source>
</reference>
<accession>Q5HKU2</accession>
<keyword id="KW-0056">Arginine metabolism</keyword>
<keyword id="KW-0963">Cytoplasm</keyword>
<keyword id="KW-0378">Hydrolase</keyword>
<keyword id="KW-1185">Reference proteome</keyword>
<organism>
    <name type="scientific">Staphylococcus epidermidis (strain ATCC 35984 / DSM 28319 / BCRC 17069 / CCUG 31568 / BM 3577 / RP62A)</name>
    <dbReference type="NCBI Taxonomy" id="176279"/>
    <lineage>
        <taxon>Bacteria</taxon>
        <taxon>Bacillati</taxon>
        <taxon>Bacillota</taxon>
        <taxon>Bacilli</taxon>
        <taxon>Bacillales</taxon>
        <taxon>Staphylococcaceae</taxon>
        <taxon>Staphylococcus</taxon>
    </lineage>
</organism>
<dbReference type="EC" id="3.5.3.6" evidence="1"/>
<dbReference type="EMBL" id="CP000029">
    <property type="protein sequence ID" value="AAW53094.1"/>
    <property type="molecule type" value="Genomic_DNA"/>
</dbReference>
<dbReference type="RefSeq" id="WP_002437936.1">
    <property type="nucleotide sequence ID" value="NC_002976.3"/>
</dbReference>
<dbReference type="SMR" id="Q5HKU2"/>
<dbReference type="STRING" id="176279.SERP2250"/>
<dbReference type="GeneID" id="50017714"/>
<dbReference type="KEGG" id="ser:SERP2250"/>
<dbReference type="eggNOG" id="COG2235">
    <property type="taxonomic scope" value="Bacteria"/>
</dbReference>
<dbReference type="HOGENOM" id="CLU_052662_0_1_9"/>
<dbReference type="UniPathway" id="UPA00254">
    <property type="reaction ID" value="UER00364"/>
</dbReference>
<dbReference type="Proteomes" id="UP000000531">
    <property type="component" value="Chromosome"/>
</dbReference>
<dbReference type="GO" id="GO:0005737">
    <property type="term" value="C:cytoplasm"/>
    <property type="evidence" value="ECO:0007669"/>
    <property type="project" value="UniProtKB-SubCell"/>
</dbReference>
<dbReference type="GO" id="GO:0016990">
    <property type="term" value="F:arginine deiminase activity"/>
    <property type="evidence" value="ECO:0007669"/>
    <property type="project" value="UniProtKB-UniRule"/>
</dbReference>
<dbReference type="GO" id="GO:0019547">
    <property type="term" value="P:arginine catabolic process to ornithine"/>
    <property type="evidence" value="ECO:0007669"/>
    <property type="project" value="UniProtKB-UniRule"/>
</dbReference>
<dbReference type="GO" id="GO:0019546">
    <property type="term" value="P:arginine deiminase pathway"/>
    <property type="evidence" value="ECO:0007669"/>
    <property type="project" value="TreeGrafter"/>
</dbReference>
<dbReference type="Gene3D" id="1.10.3930.10">
    <property type="entry name" value="Arginine deiminase"/>
    <property type="match status" value="1"/>
</dbReference>
<dbReference type="Gene3D" id="3.75.10.10">
    <property type="entry name" value="L-arginine/glycine Amidinotransferase, Chain A"/>
    <property type="match status" value="1"/>
</dbReference>
<dbReference type="HAMAP" id="MF_00242">
    <property type="entry name" value="Arg_deiminase"/>
    <property type="match status" value="1"/>
</dbReference>
<dbReference type="InterPro" id="IPR003876">
    <property type="entry name" value="Arg_deiminase"/>
</dbReference>
<dbReference type="NCBIfam" id="TIGR01078">
    <property type="entry name" value="arcA"/>
    <property type="match status" value="1"/>
</dbReference>
<dbReference type="NCBIfam" id="NF002381">
    <property type="entry name" value="PRK01388.1"/>
    <property type="match status" value="1"/>
</dbReference>
<dbReference type="PANTHER" id="PTHR47271">
    <property type="entry name" value="ARGININE DEIMINASE"/>
    <property type="match status" value="1"/>
</dbReference>
<dbReference type="PANTHER" id="PTHR47271:SF2">
    <property type="entry name" value="ARGININE DEIMINASE"/>
    <property type="match status" value="1"/>
</dbReference>
<dbReference type="Pfam" id="PF02274">
    <property type="entry name" value="ADI"/>
    <property type="match status" value="1"/>
</dbReference>
<dbReference type="PIRSF" id="PIRSF006356">
    <property type="entry name" value="Arg_deiminase"/>
    <property type="match status" value="1"/>
</dbReference>
<dbReference type="PRINTS" id="PR01466">
    <property type="entry name" value="ARGDEIMINASE"/>
</dbReference>
<dbReference type="SUPFAM" id="SSF55909">
    <property type="entry name" value="Pentein"/>
    <property type="match status" value="1"/>
</dbReference>
<name>ARCA_STAEQ</name>
<feature type="chain" id="PRO_0000182242" description="Arginine deiminase">
    <location>
        <begin position="1"/>
        <end position="411"/>
    </location>
</feature>
<feature type="active site" description="Amidino-cysteine intermediate" evidence="1">
    <location>
        <position position="401"/>
    </location>
</feature>
<evidence type="ECO:0000255" key="1">
    <source>
        <dbReference type="HAMAP-Rule" id="MF_00242"/>
    </source>
</evidence>
<sequence length="411" mass="47112">MTNGPIQVNSEIGKLKTVLLKRPGKELENLVPDYLDGLLFDDIPFLKVAQQEHDHFAQVLQDEGIEVLYLEKLAAQSIEDSNVREQFIDDVLAESRKTILGHEKEIKKLFSTLSNQALINKIMAGVRKEEIQLESTHLVEYMDDKYPFYLDPMPNLYFTRDPQASIGRGMTVNRMFWRARRRESIFISYILKHHPRFKDENIPLWVDRDCPFNIEGGDELVLSKDVLAIGISERTSAQAIERLARRIFKDPLSTFKKVVAIEIPTSRTFMHLDTVCTMIDYDKFTTHSAILKSEGNMNIFIIEYDDKAEDIKIQHSSHLKQTLEEVLDVDEITLIPTGNGDIIDGAREQWNDGSNTLCIRPGVVVTYDRNYVSNQLLREHGIKVIEIPGSELVRGRGGPRCMSQPLIREDL</sequence>